<comment type="function">
    <text evidence="1">Located at the top of the head of the 30S subunit, it contacts several helices of the 16S rRNA. In the E.coli 70S ribosome in the initiation state it has been modeled to contact the 23S rRNA (bridge B1a) and protein L5 of the 50S subunit (bridge B1b), connecting the 2 subunits; bridge B1a is broken in the model with bound EF-G, while the protein-protein contacts between S13 and L5 in B1b change. Contacts the tRNAs in the A and P sites (By similarity).</text>
</comment>
<comment type="subunit">
    <text evidence="1">Part of the 30S ribosomal subunit. Forms a loose heterodimer with protein S19. Cross-links to the P site tRNA and weakly to the A site tRNA. Forms two bridges to the 50S subunit in the 70S ribosome, contacting the 16S rRNA and protein L5 (By similarity).</text>
</comment>
<comment type="similarity">
    <text evidence="3">Belongs to the universal ribosomal protein uS13 family.</text>
</comment>
<proteinExistence type="inferred from homology"/>
<organism>
    <name type="scientific">Escherichia coli O6:H1 (strain CFT073 / ATCC 700928 / UPEC)</name>
    <dbReference type="NCBI Taxonomy" id="199310"/>
    <lineage>
        <taxon>Bacteria</taxon>
        <taxon>Pseudomonadati</taxon>
        <taxon>Pseudomonadota</taxon>
        <taxon>Gammaproteobacteria</taxon>
        <taxon>Enterobacterales</taxon>
        <taxon>Enterobacteriaceae</taxon>
        <taxon>Escherichia</taxon>
    </lineage>
</organism>
<accession>P0A7T0</accession>
<accession>P02369</accession>
<keyword id="KW-1185">Reference proteome</keyword>
<keyword id="KW-0687">Ribonucleoprotein</keyword>
<keyword id="KW-0689">Ribosomal protein</keyword>
<keyword id="KW-0694">RNA-binding</keyword>
<keyword id="KW-0699">rRNA-binding</keyword>
<keyword id="KW-0820">tRNA-binding</keyword>
<reference key="1">
    <citation type="journal article" date="2002" name="Proc. Natl. Acad. Sci. U.S.A.">
        <title>Extensive mosaic structure revealed by the complete genome sequence of uropathogenic Escherichia coli.</title>
        <authorList>
            <person name="Welch R.A."/>
            <person name="Burland V."/>
            <person name="Plunkett G. III"/>
            <person name="Redford P."/>
            <person name="Roesch P."/>
            <person name="Rasko D."/>
            <person name="Buckles E.L."/>
            <person name="Liou S.-R."/>
            <person name="Boutin A."/>
            <person name="Hackett J."/>
            <person name="Stroud D."/>
            <person name="Mayhew G.F."/>
            <person name="Rose D.J."/>
            <person name="Zhou S."/>
            <person name="Schwartz D.C."/>
            <person name="Perna N.T."/>
            <person name="Mobley H.L.T."/>
            <person name="Donnenberg M.S."/>
            <person name="Blattner F.R."/>
        </authorList>
    </citation>
    <scope>NUCLEOTIDE SEQUENCE [LARGE SCALE GENOMIC DNA]</scope>
    <source>
        <strain>CFT073 / ATCC 700928 / UPEC</strain>
    </source>
</reference>
<gene>
    <name type="primary">rpsM</name>
    <name type="ordered locus">c4060</name>
</gene>
<feature type="initiator methionine" description="Removed" evidence="1">
    <location>
        <position position="1"/>
    </location>
</feature>
<feature type="chain" id="PRO_0000132090" description="Small ribosomal subunit protein uS13">
    <location>
        <begin position="2"/>
        <end position="118"/>
    </location>
</feature>
<feature type="region of interest" description="Disordered" evidence="2">
    <location>
        <begin position="94"/>
        <end position="118"/>
    </location>
</feature>
<dbReference type="EMBL" id="AE014075">
    <property type="protein sequence ID" value="AAN82498.1"/>
    <property type="molecule type" value="Genomic_DNA"/>
</dbReference>
<dbReference type="RefSeq" id="WP_000090775.1">
    <property type="nucleotide sequence ID" value="NZ_CP051263.1"/>
</dbReference>
<dbReference type="SMR" id="P0A7T0"/>
<dbReference type="STRING" id="199310.c4060"/>
<dbReference type="GeneID" id="93778689"/>
<dbReference type="KEGG" id="ecc:c4060"/>
<dbReference type="eggNOG" id="COG0099">
    <property type="taxonomic scope" value="Bacteria"/>
</dbReference>
<dbReference type="HOGENOM" id="CLU_103849_1_2_6"/>
<dbReference type="BioCyc" id="ECOL199310:C4060-MONOMER"/>
<dbReference type="Proteomes" id="UP000001410">
    <property type="component" value="Chromosome"/>
</dbReference>
<dbReference type="GO" id="GO:0005829">
    <property type="term" value="C:cytosol"/>
    <property type="evidence" value="ECO:0007669"/>
    <property type="project" value="TreeGrafter"/>
</dbReference>
<dbReference type="GO" id="GO:0015935">
    <property type="term" value="C:small ribosomal subunit"/>
    <property type="evidence" value="ECO:0007669"/>
    <property type="project" value="TreeGrafter"/>
</dbReference>
<dbReference type="GO" id="GO:0019843">
    <property type="term" value="F:rRNA binding"/>
    <property type="evidence" value="ECO:0007669"/>
    <property type="project" value="UniProtKB-UniRule"/>
</dbReference>
<dbReference type="GO" id="GO:0003735">
    <property type="term" value="F:structural constituent of ribosome"/>
    <property type="evidence" value="ECO:0007669"/>
    <property type="project" value="InterPro"/>
</dbReference>
<dbReference type="GO" id="GO:0000049">
    <property type="term" value="F:tRNA binding"/>
    <property type="evidence" value="ECO:0007669"/>
    <property type="project" value="UniProtKB-UniRule"/>
</dbReference>
<dbReference type="GO" id="GO:0006412">
    <property type="term" value="P:translation"/>
    <property type="evidence" value="ECO:0007669"/>
    <property type="project" value="UniProtKB-UniRule"/>
</dbReference>
<dbReference type="FunFam" id="1.10.8.50:FF:000001">
    <property type="entry name" value="30S ribosomal protein S13"/>
    <property type="match status" value="1"/>
</dbReference>
<dbReference type="FunFam" id="4.10.910.10:FF:000001">
    <property type="entry name" value="30S ribosomal protein S13"/>
    <property type="match status" value="1"/>
</dbReference>
<dbReference type="Gene3D" id="1.10.8.50">
    <property type="match status" value="1"/>
</dbReference>
<dbReference type="Gene3D" id="4.10.910.10">
    <property type="entry name" value="30s ribosomal protein s13, domain 2"/>
    <property type="match status" value="1"/>
</dbReference>
<dbReference type="HAMAP" id="MF_01315">
    <property type="entry name" value="Ribosomal_uS13"/>
    <property type="match status" value="1"/>
</dbReference>
<dbReference type="InterPro" id="IPR027437">
    <property type="entry name" value="Rbsml_uS13_C"/>
</dbReference>
<dbReference type="InterPro" id="IPR001892">
    <property type="entry name" value="Ribosomal_uS13"/>
</dbReference>
<dbReference type="InterPro" id="IPR010979">
    <property type="entry name" value="Ribosomal_uS13-like_H2TH"/>
</dbReference>
<dbReference type="InterPro" id="IPR019980">
    <property type="entry name" value="Ribosomal_uS13_bac-type"/>
</dbReference>
<dbReference type="InterPro" id="IPR018269">
    <property type="entry name" value="Ribosomal_uS13_CS"/>
</dbReference>
<dbReference type="NCBIfam" id="TIGR03631">
    <property type="entry name" value="uS13_bact"/>
    <property type="match status" value="1"/>
</dbReference>
<dbReference type="PANTHER" id="PTHR10871">
    <property type="entry name" value="30S RIBOSOMAL PROTEIN S13/40S RIBOSOMAL PROTEIN S18"/>
    <property type="match status" value="1"/>
</dbReference>
<dbReference type="PANTHER" id="PTHR10871:SF1">
    <property type="entry name" value="SMALL RIBOSOMAL SUBUNIT PROTEIN US13M"/>
    <property type="match status" value="1"/>
</dbReference>
<dbReference type="Pfam" id="PF00416">
    <property type="entry name" value="Ribosomal_S13"/>
    <property type="match status" value="1"/>
</dbReference>
<dbReference type="PIRSF" id="PIRSF002134">
    <property type="entry name" value="Ribosomal_S13"/>
    <property type="match status" value="1"/>
</dbReference>
<dbReference type="SUPFAM" id="SSF46946">
    <property type="entry name" value="S13-like H2TH domain"/>
    <property type="match status" value="1"/>
</dbReference>
<dbReference type="PROSITE" id="PS00646">
    <property type="entry name" value="RIBOSOMAL_S13_1"/>
    <property type="match status" value="1"/>
</dbReference>
<dbReference type="PROSITE" id="PS50159">
    <property type="entry name" value="RIBOSOMAL_S13_2"/>
    <property type="match status" value="1"/>
</dbReference>
<evidence type="ECO:0000250" key="1"/>
<evidence type="ECO:0000256" key="2">
    <source>
        <dbReference type="SAM" id="MobiDB-lite"/>
    </source>
</evidence>
<evidence type="ECO:0000305" key="3"/>
<name>RS13_ECOL6</name>
<sequence>MARIAGINIPDHKHAVIALTSIYGVGKTRSKAILAAAGIAEDVKISELSEGQIDTLRDEVAKFVVEGDLRREISMSIKRLMDLGCYRGLRHRRGLPVRGQRTKTNARTRKGPRKPIKK</sequence>
<protein>
    <recommendedName>
        <fullName evidence="3">Small ribosomal subunit protein uS13</fullName>
    </recommendedName>
    <alternativeName>
        <fullName>30S ribosomal protein S13</fullName>
    </alternativeName>
</protein>